<feature type="chain" id="PRO_0000350039" description="Probable dual-specificity RNA methyltransferase RlmN">
    <location>
        <begin position="1"/>
        <end position="362"/>
    </location>
</feature>
<feature type="domain" description="Radical SAM core" evidence="2">
    <location>
        <begin position="111"/>
        <end position="344"/>
    </location>
</feature>
<feature type="active site" description="Proton acceptor" evidence="1">
    <location>
        <position position="105"/>
    </location>
</feature>
<feature type="active site" description="S-methylcysteine intermediate" evidence="1">
    <location>
        <position position="349"/>
    </location>
</feature>
<feature type="binding site" evidence="1">
    <location>
        <position position="125"/>
    </location>
    <ligand>
        <name>[4Fe-4S] cluster</name>
        <dbReference type="ChEBI" id="CHEBI:49883"/>
        <note>4Fe-4S-S-AdoMet</note>
    </ligand>
</feature>
<feature type="binding site" evidence="1">
    <location>
        <position position="129"/>
    </location>
    <ligand>
        <name>[4Fe-4S] cluster</name>
        <dbReference type="ChEBI" id="CHEBI:49883"/>
        <note>4Fe-4S-S-AdoMet</note>
    </ligand>
</feature>
<feature type="binding site" evidence="1">
    <location>
        <position position="132"/>
    </location>
    <ligand>
        <name>[4Fe-4S] cluster</name>
        <dbReference type="ChEBI" id="CHEBI:49883"/>
        <note>4Fe-4S-S-AdoMet</note>
    </ligand>
</feature>
<feature type="binding site" evidence="1">
    <location>
        <begin position="175"/>
        <end position="176"/>
    </location>
    <ligand>
        <name>S-adenosyl-L-methionine</name>
        <dbReference type="ChEBI" id="CHEBI:59789"/>
    </ligand>
</feature>
<feature type="binding site" evidence="1">
    <location>
        <position position="207"/>
    </location>
    <ligand>
        <name>S-adenosyl-L-methionine</name>
        <dbReference type="ChEBI" id="CHEBI:59789"/>
    </ligand>
</feature>
<feature type="binding site" evidence="1">
    <location>
        <begin position="230"/>
        <end position="232"/>
    </location>
    <ligand>
        <name>S-adenosyl-L-methionine</name>
        <dbReference type="ChEBI" id="CHEBI:59789"/>
    </ligand>
</feature>
<feature type="binding site" evidence="1">
    <location>
        <position position="306"/>
    </location>
    <ligand>
        <name>S-adenosyl-L-methionine</name>
        <dbReference type="ChEBI" id="CHEBI:59789"/>
    </ligand>
</feature>
<feature type="disulfide bond" description="(transient)" evidence="1">
    <location>
        <begin position="118"/>
        <end position="349"/>
    </location>
</feature>
<proteinExistence type="inferred from homology"/>
<comment type="function">
    <text evidence="1">Specifically methylates position 2 of adenine 2503 in 23S rRNA and position 2 of adenine 37 in tRNAs.</text>
</comment>
<comment type="catalytic activity">
    <reaction evidence="1">
        <text>adenosine(2503) in 23S rRNA + 2 reduced [2Fe-2S]-[ferredoxin] + 2 S-adenosyl-L-methionine = 2-methyladenosine(2503) in 23S rRNA + 5'-deoxyadenosine + L-methionine + 2 oxidized [2Fe-2S]-[ferredoxin] + S-adenosyl-L-homocysteine</text>
        <dbReference type="Rhea" id="RHEA:42916"/>
        <dbReference type="Rhea" id="RHEA-COMP:10000"/>
        <dbReference type="Rhea" id="RHEA-COMP:10001"/>
        <dbReference type="Rhea" id="RHEA-COMP:10152"/>
        <dbReference type="Rhea" id="RHEA-COMP:10282"/>
        <dbReference type="ChEBI" id="CHEBI:17319"/>
        <dbReference type="ChEBI" id="CHEBI:33737"/>
        <dbReference type="ChEBI" id="CHEBI:33738"/>
        <dbReference type="ChEBI" id="CHEBI:57844"/>
        <dbReference type="ChEBI" id="CHEBI:57856"/>
        <dbReference type="ChEBI" id="CHEBI:59789"/>
        <dbReference type="ChEBI" id="CHEBI:74411"/>
        <dbReference type="ChEBI" id="CHEBI:74497"/>
        <dbReference type="EC" id="2.1.1.192"/>
    </reaction>
</comment>
<comment type="catalytic activity">
    <reaction evidence="1">
        <text>adenosine(37) in tRNA + 2 reduced [2Fe-2S]-[ferredoxin] + 2 S-adenosyl-L-methionine = 2-methyladenosine(37) in tRNA + 5'-deoxyadenosine + L-methionine + 2 oxidized [2Fe-2S]-[ferredoxin] + S-adenosyl-L-homocysteine</text>
        <dbReference type="Rhea" id="RHEA:43332"/>
        <dbReference type="Rhea" id="RHEA-COMP:10000"/>
        <dbReference type="Rhea" id="RHEA-COMP:10001"/>
        <dbReference type="Rhea" id="RHEA-COMP:10162"/>
        <dbReference type="Rhea" id="RHEA-COMP:10485"/>
        <dbReference type="ChEBI" id="CHEBI:17319"/>
        <dbReference type="ChEBI" id="CHEBI:33737"/>
        <dbReference type="ChEBI" id="CHEBI:33738"/>
        <dbReference type="ChEBI" id="CHEBI:57844"/>
        <dbReference type="ChEBI" id="CHEBI:57856"/>
        <dbReference type="ChEBI" id="CHEBI:59789"/>
        <dbReference type="ChEBI" id="CHEBI:74411"/>
        <dbReference type="ChEBI" id="CHEBI:74497"/>
        <dbReference type="EC" id="2.1.1.192"/>
    </reaction>
</comment>
<comment type="cofactor">
    <cofactor evidence="1">
        <name>[4Fe-4S] cluster</name>
        <dbReference type="ChEBI" id="CHEBI:49883"/>
    </cofactor>
    <text evidence="1">Binds 1 [4Fe-4S] cluster. The cluster is coordinated with 3 cysteines and an exchangeable S-adenosyl-L-methionine.</text>
</comment>
<comment type="subcellular location">
    <subcellularLocation>
        <location evidence="1">Cytoplasm</location>
    </subcellularLocation>
</comment>
<comment type="miscellaneous">
    <text evidence="1">Reaction proceeds by a ping-pong mechanism involving intermediate methylation of a conserved cysteine residue.</text>
</comment>
<comment type="similarity">
    <text evidence="1">Belongs to the radical SAM superfamily. RlmN family.</text>
</comment>
<name>RLMN_BACMK</name>
<reference key="1">
    <citation type="journal article" date="2008" name="Chem. Biol. Interact.">
        <title>Extending the Bacillus cereus group genomics to putative food-borne pathogens of different toxicity.</title>
        <authorList>
            <person name="Lapidus A."/>
            <person name="Goltsman E."/>
            <person name="Auger S."/>
            <person name="Galleron N."/>
            <person name="Segurens B."/>
            <person name="Dossat C."/>
            <person name="Land M.L."/>
            <person name="Broussolle V."/>
            <person name="Brillard J."/>
            <person name="Guinebretiere M.-H."/>
            <person name="Sanchis V."/>
            <person name="Nguen-the C."/>
            <person name="Lereclus D."/>
            <person name="Richardson P."/>
            <person name="Wincker P."/>
            <person name="Weissenbach J."/>
            <person name="Ehrlich S.D."/>
            <person name="Sorokin A."/>
        </authorList>
    </citation>
    <scope>NUCLEOTIDE SEQUENCE [LARGE SCALE GENOMIC DNA]</scope>
    <source>
        <strain>KBAB4</strain>
    </source>
</reference>
<sequence>METTVKKQKKNLETKKPSIYSLQLHEMQDWLKEQGEPKFRAGQIFDWLYKKRVKNYEDMSNLAKGLRDKLSNSFDITTLNTLVKQTSSDGTIKFLFQLYDGYSIETVLMRHEYGNSICVTTQVGCRIGCTFCASTLGGLKRNLEAGEIVAQVVEVQRALDETEERVSSLVVMGIGEPFDNYDNLMSFLRIVNHEKGIHIGARHMTVSTSGIVPKIYKFAEEDMQINFAISLHAANTEIRSKLMPINRAYKLPDLMEAVKYYVNRTGRRITFEYGLFGGENDQVEHAEELAALLKGVKCHVNLIPVNYVPERDYVRTPREQIFLFEKTLKDRGVNVTIRREQGHDIDAACGQLRAKERKEETR</sequence>
<gene>
    <name evidence="1" type="primary">rlmN</name>
    <name type="ordered locus">BcerKBAB4_3687</name>
</gene>
<organism>
    <name type="scientific">Bacillus mycoides (strain KBAB4)</name>
    <name type="common">Bacillus weihenstephanensis</name>
    <dbReference type="NCBI Taxonomy" id="315730"/>
    <lineage>
        <taxon>Bacteria</taxon>
        <taxon>Bacillati</taxon>
        <taxon>Bacillota</taxon>
        <taxon>Bacilli</taxon>
        <taxon>Bacillales</taxon>
        <taxon>Bacillaceae</taxon>
        <taxon>Bacillus</taxon>
        <taxon>Bacillus cereus group</taxon>
    </lineage>
</organism>
<accession>A9VTA2</accession>
<evidence type="ECO:0000255" key="1">
    <source>
        <dbReference type="HAMAP-Rule" id="MF_01849"/>
    </source>
</evidence>
<evidence type="ECO:0000255" key="2">
    <source>
        <dbReference type="PROSITE-ProRule" id="PRU01266"/>
    </source>
</evidence>
<keyword id="KW-0004">4Fe-4S</keyword>
<keyword id="KW-0963">Cytoplasm</keyword>
<keyword id="KW-1015">Disulfide bond</keyword>
<keyword id="KW-0408">Iron</keyword>
<keyword id="KW-0411">Iron-sulfur</keyword>
<keyword id="KW-0479">Metal-binding</keyword>
<keyword id="KW-0489">Methyltransferase</keyword>
<keyword id="KW-0698">rRNA processing</keyword>
<keyword id="KW-0949">S-adenosyl-L-methionine</keyword>
<keyword id="KW-0808">Transferase</keyword>
<keyword id="KW-0819">tRNA processing</keyword>
<dbReference type="EC" id="2.1.1.192" evidence="1"/>
<dbReference type="EMBL" id="CP000903">
    <property type="protein sequence ID" value="ABY44858.1"/>
    <property type="molecule type" value="Genomic_DNA"/>
</dbReference>
<dbReference type="RefSeq" id="WP_002014500.1">
    <property type="nucleotide sequence ID" value="NC_010184.1"/>
</dbReference>
<dbReference type="SMR" id="A9VTA2"/>
<dbReference type="GeneID" id="66266571"/>
<dbReference type="KEGG" id="bwe:BcerKBAB4_3687"/>
<dbReference type="eggNOG" id="COG0820">
    <property type="taxonomic scope" value="Bacteria"/>
</dbReference>
<dbReference type="HOGENOM" id="CLU_029101_0_1_9"/>
<dbReference type="Proteomes" id="UP000002154">
    <property type="component" value="Chromosome"/>
</dbReference>
<dbReference type="GO" id="GO:0005737">
    <property type="term" value="C:cytoplasm"/>
    <property type="evidence" value="ECO:0007669"/>
    <property type="project" value="UniProtKB-SubCell"/>
</dbReference>
<dbReference type="GO" id="GO:0051539">
    <property type="term" value="F:4 iron, 4 sulfur cluster binding"/>
    <property type="evidence" value="ECO:0007669"/>
    <property type="project" value="UniProtKB-UniRule"/>
</dbReference>
<dbReference type="GO" id="GO:0046872">
    <property type="term" value="F:metal ion binding"/>
    <property type="evidence" value="ECO:0007669"/>
    <property type="project" value="UniProtKB-KW"/>
</dbReference>
<dbReference type="GO" id="GO:0070040">
    <property type="term" value="F:rRNA (adenine(2503)-C2-)-methyltransferase activity"/>
    <property type="evidence" value="ECO:0007669"/>
    <property type="project" value="UniProtKB-UniRule"/>
</dbReference>
<dbReference type="GO" id="GO:0019843">
    <property type="term" value="F:rRNA binding"/>
    <property type="evidence" value="ECO:0007669"/>
    <property type="project" value="UniProtKB-UniRule"/>
</dbReference>
<dbReference type="GO" id="GO:0002935">
    <property type="term" value="F:tRNA (adenine(37)-C2)-methyltransferase activity"/>
    <property type="evidence" value="ECO:0007669"/>
    <property type="project" value="UniProtKB-UniRule"/>
</dbReference>
<dbReference type="GO" id="GO:0000049">
    <property type="term" value="F:tRNA binding"/>
    <property type="evidence" value="ECO:0007669"/>
    <property type="project" value="UniProtKB-UniRule"/>
</dbReference>
<dbReference type="GO" id="GO:0070475">
    <property type="term" value="P:rRNA base methylation"/>
    <property type="evidence" value="ECO:0007669"/>
    <property type="project" value="UniProtKB-UniRule"/>
</dbReference>
<dbReference type="GO" id="GO:0030488">
    <property type="term" value="P:tRNA methylation"/>
    <property type="evidence" value="ECO:0007669"/>
    <property type="project" value="UniProtKB-UniRule"/>
</dbReference>
<dbReference type="CDD" id="cd01335">
    <property type="entry name" value="Radical_SAM"/>
    <property type="match status" value="1"/>
</dbReference>
<dbReference type="FunFam" id="1.10.150.530:FF:000002">
    <property type="entry name" value="Probable dual-specificity RNA methyltransferase RlmN"/>
    <property type="match status" value="1"/>
</dbReference>
<dbReference type="FunFam" id="3.20.20.70:FF:000014">
    <property type="entry name" value="Probable dual-specificity RNA methyltransferase RlmN"/>
    <property type="match status" value="1"/>
</dbReference>
<dbReference type="Gene3D" id="1.10.150.530">
    <property type="match status" value="1"/>
</dbReference>
<dbReference type="Gene3D" id="3.20.20.70">
    <property type="entry name" value="Aldolase class I"/>
    <property type="match status" value="1"/>
</dbReference>
<dbReference type="HAMAP" id="MF_01849">
    <property type="entry name" value="RNA_methyltr_RlmN"/>
    <property type="match status" value="1"/>
</dbReference>
<dbReference type="InterPro" id="IPR013785">
    <property type="entry name" value="Aldolase_TIM"/>
</dbReference>
<dbReference type="InterPro" id="IPR040072">
    <property type="entry name" value="Methyltransferase_A"/>
</dbReference>
<dbReference type="InterPro" id="IPR048641">
    <property type="entry name" value="RlmN_N"/>
</dbReference>
<dbReference type="InterPro" id="IPR027492">
    <property type="entry name" value="RNA_MTrfase_RlmN"/>
</dbReference>
<dbReference type="InterPro" id="IPR004383">
    <property type="entry name" value="rRNA_lsu_MTrfase_RlmN/Cfr"/>
</dbReference>
<dbReference type="InterPro" id="IPR007197">
    <property type="entry name" value="rSAM"/>
</dbReference>
<dbReference type="NCBIfam" id="TIGR00048">
    <property type="entry name" value="rRNA_mod_RlmN"/>
    <property type="match status" value="1"/>
</dbReference>
<dbReference type="PANTHER" id="PTHR30544">
    <property type="entry name" value="23S RRNA METHYLTRANSFERASE"/>
    <property type="match status" value="1"/>
</dbReference>
<dbReference type="PANTHER" id="PTHR30544:SF5">
    <property type="entry name" value="RADICAL SAM CORE DOMAIN-CONTAINING PROTEIN"/>
    <property type="match status" value="1"/>
</dbReference>
<dbReference type="Pfam" id="PF04055">
    <property type="entry name" value="Radical_SAM"/>
    <property type="match status" value="1"/>
</dbReference>
<dbReference type="Pfam" id="PF21016">
    <property type="entry name" value="RlmN_N"/>
    <property type="match status" value="1"/>
</dbReference>
<dbReference type="PIRSF" id="PIRSF006004">
    <property type="entry name" value="CHP00048"/>
    <property type="match status" value="1"/>
</dbReference>
<dbReference type="SFLD" id="SFLDF00275">
    <property type="entry name" value="adenosine_C2_methyltransferase"/>
    <property type="match status" value="1"/>
</dbReference>
<dbReference type="SFLD" id="SFLDG01062">
    <property type="entry name" value="methyltransferase_(Class_A)"/>
    <property type="match status" value="1"/>
</dbReference>
<dbReference type="SUPFAM" id="SSF102114">
    <property type="entry name" value="Radical SAM enzymes"/>
    <property type="match status" value="1"/>
</dbReference>
<dbReference type="PROSITE" id="PS51918">
    <property type="entry name" value="RADICAL_SAM"/>
    <property type="match status" value="1"/>
</dbReference>
<protein>
    <recommendedName>
        <fullName evidence="1">Probable dual-specificity RNA methyltransferase RlmN</fullName>
        <ecNumber evidence="1">2.1.1.192</ecNumber>
    </recommendedName>
    <alternativeName>
        <fullName evidence="1">23S rRNA (adenine(2503)-C(2))-methyltransferase</fullName>
    </alternativeName>
    <alternativeName>
        <fullName evidence="1">23S rRNA m2A2503 methyltransferase</fullName>
    </alternativeName>
    <alternativeName>
        <fullName evidence="1">Ribosomal RNA large subunit methyltransferase N</fullName>
    </alternativeName>
    <alternativeName>
        <fullName evidence="1">tRNA (adenine(37)-C(2))-methyltransferase</fullName>
    </alternativeName>
    <alternativeName>
        <fullName evidence="1">tRNA m2A37 methyltransferase</fullName>
    </alternativeName>
</protein>